<geneLocation type="chloroplast"/>
<protein>
    <recommendedName>
        <fullName evidence="1">Ribulose bisphosphate carboxylase large chain</fullName>
        <shortName evidence="1">RuBisCO large subunit</shortName>
        <ecNumber evidence="1">4.1.1.39</ecNumber>
    </recommendedName>
</protein>
<organism>
    <name type="scientific">Zea mays</name>
    <name type="common">Maize</name>
    <dbReference type="NCBI Taxonomy" id="4577"/>
    <lineage>
        <taxon>Eukaryota</taxon>
        <taxon>Viridiplantae</taxon>
        <taxon>Streptophyta</taxon>
        <taxon>Embryophyta</taxon>
        <taxon>Tracheophyta</taxon>
        <taxon>Spermatophyta</taxon>
        <taxon>Magnoliopsida</taxon>
        <taxon>Liliopsida</taxon>
        <taxon>Poales</taxon>
        <taxon>Poaceae</taxon>
        <taxon>PACMAD clade</taxon>
        <taxon>Panicoideae</taxon>
        <taxon>Andropogonodae</taxon>
        <taxon>Andropogoneae</taxon>
        <taxon>Tripsacinae</taxon>
        <taxon>Zea</taxon>
    </lineage>
</organism>
<feature type="propeptide" id="PRO_0000031295" evidence="1">
    <location>
        <begin position="1"/>
        <end position="2"/>
    </location>
</feature>
<feature type="chain" id="PRO_0000031296" description="Ribulose bisphosphate carboxylase large chain">
    <location>
        <begin position="3"/>
        <end position="476"/>
    </location>
</feature>
<feature type="active site" description="Proton acceptor" evidence="1">
    <location>
        <position position="175"/>
    </location>
</feature>
<feature type="active site" description="Proton acceptor" evidence="1">
    <location>
        <position position="294"/>
    </location>
</feature>
<feature type="binding site" description="in homodimeric partner" evidence="1">
    <location>
        <position position="123"/>
    </location>
    <ligand>
        <name>substrate</name>
    </ligand>
</feature>
<feature type="binding site" evidence="1">
    <location>
        <position position="173"/>
    </location>
    <ligand>
        <name>substrate</name>
    </ligand>
</feature>
<feature type="binding site" evidence="1">
    <location>
        <position position="177"/>
    </location>
    <ligand>
        <name>substrate</name>
    </ligand>
</feature>
<feature type="binding site" description="via carbamate group" evidence="1">
    <location>
        <position position="201"/>
    </location>
    <ligand>
        <name>Mg(2+)</name>
        <dbReference type="ChEBI" id="CHEBI:18420"/>
    </ligand>
</feature>
<feature type="binding site" evidence="1">
    <location>
        <position position="203"/>
    </location>
    <ligand>
        <name>Mg(2+)</name>
        <dbReference type="ChEBI" id="CHEBI:18420"/>
    </ligand>
</feature>
<feature type="binding site" evidence="1">
    <location>
        <position position="204"/>
    </location>
    <ligand>
        <name>Mg(2+)</name>
        <dbReference type="ChEBI" id="CHEBI:18420"/>
    </ligand>
</feature>
<feature type="binding site" evidence="1">
    <location>
        <position position="295"/>
    </location>
    <ligand>
        <name>substrate</name>
    </ligand>
</feature>
<feature type="binding site" evidence="1">
    <location>
        <position position="327"/>
    </location>
    <ligand>
        <name>substrate</name>
    </ligand>
</feature>
<feature type="binding site" evidence="1">
    <location>
        <position position="379"/>
    </location>
    <ligand>
        <name>substrate</name>
    </ligand>
</feature>
<feature type="site" description="Transition state stabilizer" evidence="1">
    <location>
        <position position="334"/>
    </location>
</feature>
<feature type="modified residue" description="N-acetylproline" evidence="1">
    <location>
        <position position="3"/>
    </location>
</feature>
<feature type="modified residue" description="N6,N6,N6-trimethyllysine" evidence="1">
    <location>
        <position position="14"/>
    </location>
</feature>
<feature type="modified residue" description="N6-carboxylysine" evidence="1">
    <location>
        <position position="201"/>
    </location>
</feature>
<feature type="disulfide bond" description="Interchain; in linked form" evidence="1">
    <location>
        <position position="247"/>
    </location>
</feature>
<feature type="sequence conflict" description="In Ref. 1; CAA23474." evidence="2" ref="1">
    <original>T</original>
    <variation>AA</variation>
    <location>
        <position position="63"/>
    </location>
</feature>
<feature type="sequence conflict" description="In Ref. 1." evidence="2" ref="1">
    <original>H</original>
    <variation>R</variation>
    <location>
        <position position="153"/>
    </location>
</feature>
<feature type="sequence conflict" description="In Ref. 1." evidence="2" ref="1">
    <original>I</original>
    <variation>M</variation>
    <location>
        <position position="155"/>
    </location>
</feature>
<feature type="sequence conflict" description="In Ref. 1; CAA23474." evidence="2" ref="1">
    <original>A</original>
    <variation>S</variation>
    <location>
        <position position="228"/>
    </location>
</feature>
<feature type="sequence conflict" description="In Ref. 1; CAA23474." evidence="2" ref="1">
    <original>E</original>
    <variation>D</variation>
    <location>
        <position position="248"/>
    </location>
</feature>
<feature type="sequence conflict" description="In Ref. 1; CAA23474." evidence="2" ref="1">
    <original>R</original>
    <variation>G</variation>
    <location>
        <position position="253"/>
    </location>
</feature>
<feature type="sequence conflict" description="In Ref. 1; CAA23474." evidence="2" ref="1">
    <original>E</original>
    <variation>Q</variation>
    <location>
        <position position="259"/>
    </location>
</feature>
<feature type="sequence conflict" description="In Ref. 1; CAA23474." evidence="2" ref="1">
    <location>
        <position position="291"/>
    </location>
</feature>
<feature type="sequence conflict" description="In Ref. 1; CAA23474." evidence="2" ref="1">
    <original>F</original>
    <variation>L</variation>
    <location>
        <position position="394"/>
    </location>
</feature>
<feature type="sequence conflict" description="In Ref. 1; CAA23474." evidence="2" ref="1">
    <original>P</original>
    <variation>H</variation>
    <location>
        <position position="415"/>
    </location>
</feature>
<feature type="sequence conflict" description="In Ref. 1; CAA23474." evidence="2" ref="1">
    <original>GNE</original>
    <variation>VQ</variation>
    <location>
        <begin position="441"/>
        <end position="443"/>
    </location>
</feature>
<gene>
    <name evidence="1" type="primary">rbcL</name>
</gene>
<name>RBL_MAIZE</name>
<accession>P00874</accession>
<evidence type="ECO:0000255" key="1">
    <source>
        <dbReference type="HAMAP-Rule" id="MF_01338"/>
    </source>
</evidence>
<evidence type="ECO:0000305" key="2"/>
<reference key="1">
    <citation type="journal article" date="1980" name="Nature">
        <title>Chloroplast gene sequence for the large subunit of ribulose bisphosphatecarboxylase of maize.</title>
        <authorList>
            <person name="McIntosh L."/>
            <person name="Poulsen C."/>
            <person name="Bogorad L."/>
        </authorList>
    </citation>
    <scope>NUCLEOTIDE SEQUENCE [GENOMIC DNA]</scope>
</reference>
<reference key="2">
    <citation type="journal article" date="1992" name="J. Mol. Evol.">
        <title>Relative rates of nucleotide substitution at the rbcL locus of monocotyledonous plants.</title>
        <authorList>
            <person name="Gaut B.S."/>
            <person name="Muse S.V."/>
            <person name="Clark W.D."/>
            <person name="Clegg M.T."/>
        </authorList>
    </citation>
    <scope>NUCLEOTIDE SEQUENCE [GENOMIC DNA]</scope>
    <source>
        <tissue>Leaf</tissue>
    </source>
</reference>
<reference key="3">
    <citation type="journal article" date="1995" name="J. Mol. Biol.">
        <title>Complete sequence of the maize chloroplast genome: gene content, hotspots of divergence and fine tuning of genetic information by transcript editing.</title>
        <authorList>
            <person name="Maier R.M."/>
            <person name="Neckermann K."/>
            <person name="Igloi G.L."/>
            <person name="Koessel H."/>
        </authorList>
    </citation>
    <scope>NUCLEOTIDE SEQUENCE [LARGE SCALE GENOMIC DNA]</scope>
    <source>
        <strain>cv. B73</strain>
    </source>
</reference>
<keyword id="KW-0007">Acetylation</keyword>
<keyword id="KW-0113">Calvin cycle</keyword>
<keyword id="KW-0120">Carbon dioxide fixation</keyword>
<keyword id="KW-0150">Chloroplast</keyword>
<keyword id="KW-1015">Disulfide bond</keyword>
<keyword id="KW-0456">Lyase</keyword>
<keyword id="KW-0460">Magnesium</keyword>
<keyword id="KW-0479">Metal-binding</keyword>
<keyword id="KW-0488">Methylation</keyword>
<keyword id="KW-0503">Monooxygenase</keyword>
<keyword id="KW-0560">Oxidoreductase</keyword>
<keyword id="KW-0601">Photorespiration</keyword>
<keyword id="KW-0602">Photosynthesis</keyword>
<keyword id="KW-0934">Plastid</keyword>
<keyword id="KW-1185">Reference proteome</keyword>
<sequence length="476" mass="52701">MSPQTETKASVGFKAGVKDYKLTYYTPEYETKDTDILAAFRVTPQLGVPPEEAGAAVAAESSTGTWTTVWTDGLTSLDRYKGRCYHIEPVPGDPDQYICYVAYPLDLFEEGSVTNMFTSIVGNVFGFKALRALRLEDLRIPPAYSKTFQGPPHGIQVERDKLNKYGRPLLGCTIKPKLGLSAKNYGRACYECLRGGLDFTKDDENVNSQPFMRWRDRFVFCAEAIYKAQAETGEIKGHYLNATAGTCEEMIKRAVFARELGVPIVMHDYLTGGFTANTTLSHYCRDNGLLLHIHRAMHAVIDRQKNHGMHFRVLAKALRMSGGDHIHSGTVVGKLEGEREITLGFVDLLRDDFIEKDRSRGIFFTQDWVSMPGVIPVASGGIHVWHMPALTEIFGDDSVLQFGGGTLGHPWGNAPGAAANRVALEACVQARNEGRDLAREGNEIIKAACKWSAELAAACEIWKEIKFDGFKAMDTI</sequence>
<comment type="function">
    <text evidence="1">RuBisCO catalyzes two reactions: the carboxylation of D-ribulose 1,5-bisphosphate, the primary event in carbon dioxide fixation, as well as the oxidative fragmentation of the pentose substrate in the photorespiration process. Both reactions occur simultaneously and in competition at the same active site.</text>
</comment>
<comment type="catalytic activity">
    <reaction evidence="1">
        <text>2 (2R)-3-phosphoglycerate + 2 H(+) = D-ribulose 1,5-bisphosphate + CO2 + H2O</text>
        <dbReference type="Rhea" id="RHEA:23124"/>
        <dbReference type="ChEBI" id="CHEBI:15377"/>
        <dbReference type="ChEBI" id="CHEBI:15378"/>
        <dbReference type="ChEBI" id="CHEBI:16526"/>
        <dbReference type="ChEBI" id="CHEBI:57870"/>
        <dbReference type="ChEBI" id="CHEBI:58272"/>
        <dbReference type="EC" id="4.1.1.39"/>
    </reaction>
</comment>
<comment type="catalytic activity">
    <reaction evidence="1">
        <text>D-ribulose 1,5-bisphosphate + O2 = 2-phosphoglycolate + (2R)-3-phosphoglycerate + 2 H(+)</text>
        <dbReference type="Rhea" id="RHEA:36631"/>
        <dbReference type="ChEBI" id="CHEBI:15378"/>
        <dbReference type="ChEBI" id="CHEBI:15379"/>
        <dbReference type="ChEBI" id="CHEBI:57870"/>
        <dbReference type="ChEBI" id="CHEBI:58033"/>
        <dbReference type="ChEBI" id="CHEBI:58272"/>
    </reaction>
</comment>
<comment type="cofactor">
    <cofactor evidence="1">
        <name>Mg(2+)</name>
        <dbReference type="ChEBI" id="CHEBI:18420"/>
    </cofactor>
    <text evidence="1">Binds 1 Mg(2+) ion per subunit.</text>
</comment>
<comment type="subunit">
    <text evidence="1">Heterohexadecamer of 8 large chains and 8 small chains; disulfide-linked. The disulfide link is formed within the large subunit homodimers.</text>
</comment>
<comment type="subcellular location">
    <subcellularLocation>
        <location>Plastid</location>
        <location>Chloroplast</location>
    </subcellularLocation>
</comment>
<comment type="PTM">
    <text evidence="1">The disulfide bond which can form in the large chain dimeric partners within the hexadecamer appears to be associated with oxidative stress and protein turnover.</text>
</comment>
<comment type="miscellaneous">
    <text evidence="1">The basic functional RuBisCO is composed of a large chain homodimer in a 'head-to-tail' conformation. In form I RuBisCO this homodimer is arranged in a barrel-like tetramer with the small subunits forming a tetrameric 'cap' on each end of the 'barrel'.</text>
</comment>
<comment type="similarity">
    <text evidence="1">Belongs to the RuBisCO large chain family. Type I subfamily.</text>
</comment>
<dbReference type="EC" id="4.1.1.39" evidence="1"/>
<dbReference type="EMBL" id="V00171">
    <property type="protein sequence ID" value="CAA23474.1"/>
    <property type="molecule type" value="Genomic_DNA"/>
</dbReference>
<dbReference type="EMBL" id="Z11973">
    <property type="protein sequence ID" value="CAA78027.1"/>
    <property type="molecule type" value="Genomic_DNA"/>
</dbReference>
<dbReference type="EMBL" id="X86563">
    <property type="protein sequence ID" value="CAA60294.1"/>
    <property type="molecule type" value="Genomic_DNA"/>
</dbReference>
<dbReference type="PIR" id="A01093">
    <property type="entry name" value="RKZML"/>
</dbReference>
<dbReference type="PIR" id="S58560">
    <property type="entry name" value="S58560"/>
</dbReference>
<dbReference type="RefSeq" id="NP_043033.1">
    <property type="nucleotide sequence ID" value="NC_001666.2"/>
</dbReference>
<dbReference type="SMR" id="P00874"/>
<dbReference type="FunCoup" id="P00874">
    <property type="interactions" value="660"/>
</dbReference>
<dbReference type="STRING" id="4577.P00874"/>
<dbReference type="PaxDb" id="4577-GRMZM2G360821_P01"/>
<dbReference type="GeneID" id="845212"/>
<dbReference type="KEGG" id="zma:845212"/>
<dbReference type="MaizeGDB" id="69185"/>
<dbReference type="eggNOG" id="ENOG502QTI9">
    <property type="taxonomic scope" value="Eukaryota"/>
</dbReference>
<dbReference type="InParanoid" id="P00874"/>
<dbReference type="OrthoDB" id="725602at2759"/>
<dbReference type="SABIO-RK" id="P00874"/>
<dbReference type="Proteomes" id="UP000007305">
    <property type="component" value="Chloroplast"/>
</dbReference>
<dbReference type="ExpressionAtlas" id="P00874">
    <property type="expression patterns" value="baseline and differential"/>
</dbReference>
<dbReference type="GO" id="GO:0009507">
    <property type="term" value="C:chloroplast"/>
    <property type="evidence" value="ECO:0007669"/>
    <property type="project" value="UniProtKB-SubCell"/>
</dbReference>
<dbReference type="GO" id="GO:0000287">
    <property type="term" value="F:magnesium ion binding"/>
    <property type="evidence" value="ECO:0007669"/>
    <property type="project" value="UniProtKB-UniRule"/>
</dbReference>
<dbReference type="GO" id="GO:0004497">
    <property type="term" value="F:monooxygenase activity"/>
    <property type="evidence" value="ECO:0007669"/>
    <property type="project" value="UniProtKB-KW"/>
</dbReference>
<dbReference type="GO" id="GO:0016984">
    <property type="term" value="F:ribulose-bisphosphate carboxylase activity"/>
    <property type="evidence" value="ECO:0007669"/>
    <property type="project" value="UniProtKB-UniRule"/>
</dbReference>
<dbReference type="GO" id="GO:0009853">
    <property type="term" value="P:photorespiration"/>
    <property type="evidence" value="ECO:0007669"/>
    <property type="project" value="UniProtKB-KW"/>
</dbReference>
<dbReference type="GO" id="GO:0019253">
    <property type="term" value="P:reductive pentose-phosphate cycle"/>
    <property type="evidence" value="ECO:0007669"/>
    <property type="project" value="UniProtKB-UniRule"/>
</dbReference>
<dbReference type="CDD" id="cd08212">
    <property type="entry name" value="RuBisCO_large_I"/>
    <property type="match status" value="1"/>
</dbReference>
<dbReference type="FunFam" id="3.20.20.110:FF:000001">
    <property type="entry name" value="Ribulose bisphosphate carboxylase large chain"/>
    <property type="match status" value="1"/>
</dbReference>
<dbReference type="FunFam" id="3.30.70.150:FF:000001">
    <property type="entry name" value="Ribulose bisphosphate carboxylase large chain"/>
    <property type="match status" value="1"/>
</dbReference>
<dbReference type="Gene3D" id="3.20.20.110">
    <property type="entry name" value="Ribulose bisphosphate carboxylase, large subunit, C-terminal domain"/>
    <property type="match status" value="1"/>
</dbReference>
<dbReference type="Gene3D" id="3.30.70.150">
    <property type="entry name" value="RuBisCO large subunit, N-terminal domain"/>
    <property type="match status" value="1"/>
</dbReference>
<dbReference type="HAMAP" id="MF_01338">
    <property type="entry name" value="RuBisCO_L_type1"/>
    <property type="match status" value="1"/>
</dbReference>
<dbReference type="InterPro" id="IPR033966">
    <property type="entry name" value="RuBisCO"/>
</dbReference>
<dbReference type="InterPro" id="IPR020878">
    <property type="entry name" value="RuBisCo_large_chain_AS"/>
</dbReference>
<dbReference type="InterPro" id="IPR000685">
    <property type="entry name" value="RuBisCO_lsu_C"/>
</dbReference>
<dbReference type="InterPro" id="IPR036376">
    <property type="entry name" value="RuBisCO_lsu_C_sf"/>
</dbReference>
<dbReference type="InterPro" id="IPR017443">
    <property type="entry name" value="RuBisCO_lsu_fd_N"/>
</dbReference>
<dbReference type="InterPro" id="IPR036422">
    <property type="entry name" value="RuBisCO_lsu_N_sf"/>
</dbReference>
<dbReference type="InterPro" id="IPR020888">
    <property type="entry name" value="RuBisCO_lsuI"/>
</dbReference>
<dbReference type="NCBIfam" id="NF003252">
    <property type="entry name" value="PRK04208.1"/>
    <property type="match status" value="1"/>
</dbReference>
<dbReference type="PANTHER" id="PTHR42704">
    <property type="entry name" value="RIBULOSE BISPHOSPHATE CARBOXYLASE"/>
    <property type="match status" value="1"/>
</dbReference>
<dbReference type="PANTHER" id="PTHR42704:SF16">
    <property type="entry name" value="RIBULOSE BISPHOSPHATE CARBOXYLASE LARGE CHAIN"/>
    <property type="match status" value="1"/>
</dbReference>
<dbReference type="Pfam" id="PF00016">
    <property type="entry name" value="RuBisCO_large"/>
    <property type="match status" value="1"/>
</dbReference>
<dbReference type="Pfam" id="PF02788">
    <property type="entry name" value="RuBisCO_large_N"/>
    <property type="match status" value="1"/>
</dbReference>
<dbReference type="SFLD" id="SFLDG01052">
    <property type="entry name" value="RuBisCO"/>
    <property type="match status" value="1"/>
</dbReference>
<dbReference type="SFLD" id="SFLDS00014">
    <property type="entry name" value="RuBisCO"/>
    <property type="match status" value="1"/>
</dbReference>
<dbReference type="SFLD" id="SFLDG00301">
    <property type="entry name" value="RuBisCO-like_proteins"/>
    <property type="match status" value="1"/>
</dbReference>
<dbReference type="SUPFAM" id="SSF51649">
    <property type="entry name" value="RuBisCo, C-terminal domain"/>
    <property type="match status" value="1"/>
</dbReference>
<dbReference type="SUPFAM" id="SSF54966">
    <property type="entry name" value="RuBisCO, large subunit, small (N-terminal) domain"/>
    <property type="match status" value="1"/>
</dbReference>
<dbReference type="PROSITE" id="PS00157">
    <property type="entry name" value="RUBISCO_LARGE"/>
    <property type="match status" value="1"/>
</dbReference>
<proteinExistence type="inferred from homology"/>